<reference key="1">
    <citation type="journal article" date="1998" name="Mol. Biol. Evol.">
        <title>Cytosolic isocitrate dehydrogenase in humans, mice, and voles and phylogenetic analysis of the enzyme family.</title>
        <authorList>
            <person name="Nekrutenko A."/>
            <person name="Hillis D.M."/>
            <person name="Patton J.C."/>
            <person name="Bradley R.D."/>
            <person name="Baker R.J."/>
        </authorList>
    </citation>
    <scope>NUCLEOTIDE SEQUENCE [MRNA]</scope>
</reference>
<reference key="2">
    <citation type="journal article" date="1999" name="J. Biol. Chem.">
        <title>The human PICD gene encodes a cytoplasmic and peroxisomal NADP(+)-dependent isocitrate dehydrogenase.</title>
        <authorList>
            <person name="Geisbrecht B.V."/>
            <person name="Gould S.J."/>
        </authorList>
    </citation>
    <scope>NUCLEOTIDE SEQUENCE [MRNA]</scope>
    <scope>SUBCELLULAR LOCATION</scope>
    <scope>FUNCTION</scope>
    <scope>CATALYTIC ACTIVITY</scope>
    <scope>BIOPHYSICOCHEMICAL PROPERTIES</scope>
</reference>
<reference key="3">
    <citation type="journal article" date="2001" name="Genome Res.">
        <title>Towards a catalog of human genes and proteins: sequencing and analysis of 500 novel complete protein coding human cDNAs.</title>
        <authorList>
            <person name="Wiemann S."/>
            <person name="Weil B."/>
            <person name="Wellenreuther R."/>
            <person name="Gassenhuber J."/>
            <person name="Glassl S."/>
            <person name="Ansorge W."/>
            <person name="Boecher M."/>
            <person name="Bloecker H."/>
            <person name="Bauersachs S."/>
            <person name="Blum H."/>
            <person name="Lauber J."/>
            <person name="Duesterhoeft A."/>
            <person name="Beyer A."/>
            <person name="Koehrer K."/>
            <person name="Strack N."/>
            <person name="Mewes H.-W."/>
            <person name="Ottenwaelder B."/>
            <person name="Obermaier B."/>
            <person name="Tampe J."/>
            <person name="Heubner D."/>
            <person name="Wambutt R."/>
            <person name="Korn B."/>
            <person name="Klein M."/>
            <person name="Poustka A."/>
        </authorList>
    </citation>
    <scope>NUCLEOTIDE SEQUENCE [LARGE SCALE MRNA]</scope>
    <source>
        <tissue>Kidney</tissue>
    </source>
</reference>
<reference key="4">
    <citation type="submission" date="2004-06" db="EMBL/GenBank/DDBJ databases">
        <title>Cloning of human full open reading frames in Gateway(TM) system entry vector (pDONR201).</title>
        <authorList>
            <person name="Ebert L."/>
            <person name="Schick M."/>
            <person name="Neubert P."/>
            <person name="Schatten R."/>
            <person name="Henze S."/>
            <person name="Korn B."/>
        </authorList>
    </citation>
    <scope>NUCLEOTIDE SEQUENCE [LARGE SCALE MRNA]</scope>
</reference>
<reference key="5">
    <citation type="journal article" date="2007" name="BMC Genomics">
        <title>The full-ORF clone resource of the German cDNA consortium.</title>
        <authorList>
            <person name="Bechtel S."/>
            <person name="Rosenfelder H."/>
            <person name="Duda A."/>
            <person name="Schmidt C.P."/>
            <person name="Ernst U."/>
            <person name="Wellenreuther R."/>
            <person name="Mehrle A."/>
            <person name="Schuster C."/>
            <person name="Bahr A."/>
            <person name="Bloecker H."/>
            <person name="Heubner D."/>
            <person name="Hoerlein A."/>
            <person name="Michel G."/>
            <person name="Wedler H."/>
            <person name="Koehrer K."/>
            <person name="Ottenwaelder B."/>
            <person name="Poustka A."/>
            <person name="Wiemann S."/>
            <person name="Schupp I."/>
        </authorList>
    </citation>
    <scope>NUCLEOTIDE SEQUENCE [LARGE SCALE MRNA]</scope>
    <source>
        <tissue>Endometrium</tissue>
    </source>
</reference>
<reference key="6">
    <citation type="journal article" date="2005" name="Nature">
        <title>Generation and annotation of the DNA sequences of human chromosomes 2 and 4.</title>
        <authorList>
            <person name="Hillier L.W."/>
            <person name="Graves T.A."/>
            <person name="Fulton R.S."/>
            <person name="Fulton L.A."/>
            <person name="Pepin K.H."/>
            <person name="Minx P."/>
            <person name="Wagner-McPherson C."/>
            <person name="Layman D."/>
            <person name="Wylie K."/>
            <person name="Sekhon M."/>
            <person name="Becker M.C."/>
            <person name="Fewell G.A."/>
            <person name="Delehaunty K.D."/>
            <person name="Miner T.L."/>
            <person name="Nash W.E."/>
            <person name="Kremitzki C."/>
            <person name="Oddy L."/>
            <person name="Du H."/>
            <person name="Sun H."/>
            <person name="Bradshaw-Cordum H."/>
            <person name="Ali J."/>
            <person name="Carter J."/>
            <person name="Cordes M."/>
            <person name="Harris A."/>
            <person name="Isak A."/>
            <person name="van Brunt A."/>
            <person name="Nguyen C."/>
            <person name="Du F."/>
            <person name="Courtney L."/>
            <person name="Kalicki J."/>
            <person name="Ozersky P."/>
            <person name="Abbott S."/>
            <person name="Armstrong J."/>
            <person name="Belter E.A."/>
            <person name="Caruso L."/>
            <person name="Cedroni M."/>
            <person name="Cotton M."/>
            <person name="Davidson T."/>
            <person name="Desai A."/>
            <person name="Elliott G."/>
            <person name="Erb T."/>
            <person name="Fronick C."/>
            <person name="Gaige T."/>
            <person name="Haakenson W."/>
            <person name="Haglund K."/>
            <person name="Holmes A."/>
            <person name="Harkins R."/>
            <person name="Kim K."/>
            <person name="Kruchowski S.S."/>
            <person name="Strong C.M."/>
            <person name="Grewal N."/>
            <person name="Goyea E."/>
            <person name="Hou S."/>
            <person name="Levy A."/>
            <person name="Martinka S."/>
            <person name="Mead K."/>
            <person name="McLellan M.D."/>
            <person name="Meyer R."/>
            <person name="Randall-Maher J."/>
            <person name="Tomlinson C."/>
            <person name="Dauphin-Kohlberg S."/>
            <person name="Kozlowicz-Reilly A."/>
            <person name="Shah N."/>
            <person name="Swearengen-Shahid S."/>
            <person name="Snider J."/>
            <person name="Strong J.T."/>
            <person name="Thompson J."/>
            <person name="Yoakum M."/>
            <person name="Leonard S."/>
            <person name="Pearman C."/>
            <person name="Trani L."/>
            <person name="Radionenko M."/>
            <person name="Waligorski J.E."/>
            <person name="Wang C."/>
            <person name="Rock S.M."/>
            <person name="Tin-Wollam A.-M."/>
            <person name="Maupin R."/>
            <person name="Latreille P."/>
            <person name="Wendl M.C."/>
            <person name="Yang S.-P."/>
            <person name="Pohl C."/>
            <person name="Wallis J.W."/>
            <person name="Spieth J."/>
            <person name="Bieri T.A."/>
            <person name="Berkowicz N."/>
            <person name="Nelson J.O."/>
            <person name="Osborne J."/>
            <person name="Ding L."/>
            <person name="Meyer R."/>
            <person name="Sabo A."/>
            <person name="Shotland Y."/>
            <person name="Sinha P."/>
            <person name="Wohldmann P.E."/>
            <person name="Cook L.L."/>
            <person name="Hickenbotham M.T."/>
            <person name="Eldred J."/>
            <person name="Williams D."/>
            <person name="Jones T.A."/>
            <person name="She X."/>
            <person name="Ciccarelli F.D."/>
            <person name="Izaurralde E."/>
            <person name="Taylor J."/>
            <person name="Schmutz J."/>
            <person name="Myers R.M."/>
            <person name="Cox D.R."/>
            <person name="Huang X."/>
            <person name="McPherson J.D."/>
            <person name="Mardis E.R."/>
            <person name="Clifton S.W."/>
            <person name="Warren W.C."/>
            <person name="Chinwalla A.T."/>
            <person name="Eddy S.R."/>
            <person name="Marra M.A."/>
            <person name="Ovcharenko I."/>
            <person name="Furey T.S."/>
            <person name="Miller W."/>
            <person name="Eichler E.E."/>
            <person name="Bork P."/>
            <person name="Suyama M."/>
            <person name="Torrents D."/>
            <person name="Waterston R.H."/>
            <person name="Wilson R.K."/>
        </authorList>
    </citation>
    <scope>NUCLEOTIDE SEQUENCE [LARGE SCALE GENOMIC DNA]</scope>
</reference>
<reference key="7">
    <citation type="submission" date="2005-07" db="EMBL/GenBank/DDBJ databases">
        <authorList>
            <person name="Mural R.J."/>
            <person name="Istrail S."/>
            <person name="Sutton G."/>
            <person name="Florea L."/>
            <person name="Halpern A.L."/>
            <person name="Mobarry C.M."/>
            <person name="Lippert R."/>
            <person name="Walenz B."/>
            <person name="Shatkay H."/>
            <person name="Dew I."/>
            <person name="Miller J.R."/>
            <person name="Flanigan M.J."/>
            <person name="Edwards N.J."/>
            <person name="Bolanos R."/>
            <person name="Fasulo D."/>
            <person name="Halldorsson B.V."/>
            <person name="Hannenhalli S."/>
            <person name="Turner R."/>
            <person name="Yooseph S."/>
            <person name="Lu F."/>
            <person name="Nusskern D.R."/>
            <person name="Shue B.C."/>
            <person name="Zheng X.H."/>
            <person name="Zhong F."/>
            <person name="Delcher A.L."/>
            <person name="Huson D.H."/>
            <person name="Kravitz S.A."/>
            <person name="Mouchard L."/>
            <person name="Reinert K."/>
            <person name="Remington K.A."/>
            <person name="Clark A.G."/>
            <person name="Waterman M.S."/>
            <person name="Eichler E.E."/>
            <person name="Adams M.D."/>
            <person name="Hunkapiller M.W."/>
            <person name="Myers E.W."/>
            <person name="Venter J.C."/>
        </authorList>
    </citation>
    <scope>NUCLEOTIDE SEQUENCE [LARGE SCALE GENOMIC DNA]</scope>
</reference>
<reference key="8">
    <citation type="journal article" date="2004" name="Genome Res.">
        <title>The status, quality, and expansion of the NIH full-length cDNA project: the Mammalian Gene Collection (MGC).</title>
        <authorList>
            <consortium name="The MGC Project Team"/>
        </authorList>
    </citation>
    <scope>NUCLEOTIDE SEQUENCE [LARGE SCALE MRNA]</scope>
    <source>
        <tissue>Lung</tissue>
        <tissue>Placenta</tissue>
    </source>
</reference>
<reference key="9">
    <citation type="submission" date="2008-12" db="UniProtKB">
        <authorList>
            <person name="Lubec G."/>
            <person name="Afjehi-Sadat L."/>
            <person name="Chen W.-Q."/>
            <person name="Sun Y."/>
        </authorList>
    </citation>
    <scope>PROTEIN SEQUENCE OF 5-20; 30-49; 101-109; 120-132; 141-212; 223-233; 250-270; 322-338 AND 389-400</scope>
    <scope>IDENTIFICATION BY MASS SPECTROMETRY</scope>
    <source>
        <tissue>Brain</tissue>
        <tissue>Cajal-Retzius cell</tissue>
        <tissue>Fetal brain cortex</tissue>
    </source>
</reference>
<reference key="10">
    <citation type="submission" date="1996-06" db="EMBL/GenBank/DDBJ databases">
        <title>Differential gene expression in epithelial cells induced by bile salts: identification by RNA arbitrarily primed PCR.</title>
        <authorList>
            <person name="Kullmann F."/>
            <person name="Vogt T."/>
            <person name="Welsh J."/>
            <person name="McClelland M."/>
        </authorList>
    </citation>
    <scope>NUCLEOTIDE SEQUENCE [MRNA] OF 100-253</scope>
</reference>
<reference key="11">
    <citation type="journal article" date="2009" name="Science">
        <title>Lysine acetylation targets protein complexes and co-regulates major cellular functions.</title>
        <authorList>
            <person name="Choudhary C."/>
            <person name="Kumar C."/>
            <person name="Gnad F."/>
            <person name="Nielsen M.L."/>
            <person name="Rehman M."/>
            <person name="Walther T.C."/>
            <person name="Olsen J.V."/>
            <person name="Mann M."/>
        </authorList>
    </citation>
    <scope>ACETYLATION [LARGE SCALE ANALYSIS] AT LYS-321</scope>
    <scope>IDENTIFICATION BY MASS SPECTROMETRY [LARGE SCALE ANALYSIS]</scope>
</reference>
<reference key="12">
    <citation type="journal article" date="2011" name="BMC Syst. Biol.">
        <title>Initial characterization of the human central proteome.</title>
        <authorList>
            <person name="Burkard T.R."/>
            <person name="Planyavsky M."/>
            <person name="Kaupe I."/>
            <person name="Breitwieser F.P."/>
            <person name="Buerckstuemmer T."/>
            <person name="Bennett K.L."/>
            <person name="Superti-Furga G."/>
            <person name="Colinge J."/>
        </authorList>
    </citation>
    <scope>IDENTIFICATION BY MASS SPECTROMETRY [LARGE SCALE ANALYSIS]</scope>
</reference>
<reference key="13">
    <citation type="journal article" date="2012" name="Proc. Natl. Acad. Sci. U.S.A.">
        <title>N-terminal acetylome analyses and functional insights of the N-terminal acetyltransferase NatB.</title>
        <authorList>
            <person name="Van Damme P."/>
            <person name="Lasa M."/>
            <person name="Polevoda B."/>
            <person name="Gazquez C."/>
            <person name="Elosegui-Artola A."/>
            <person name="Kim D.S."/>
            <person name="De Juan-Pardo E."/>
            <person name="Demeyer K."/>
            <person name="Hole K."/>
            <person name="Larrea E."/>
            <person name="Timmerman E."/>
            <person name="Prieto J."/>
            <person name="Arnesen T."/>
            <person name="Sherman F."/>
            <person name="Gevaert K."/>
            <person name="Aldabe R."/>
        </authorList>
    </citation>
    <scope>ACETYLATION [LARGE SCALE ANALYSIS] AT SER-2</scope>
    <scope>CLEAVAGE OF INITIATOR METHIONINE [LARGE SCALE ANALYSIS]</scope>
    <scope>IDENTIFICATION BY MASS SPECTROMETRY [LARGE SCALE ANALYSIS]</scope>
</reference>
<reference key="14">
    <citation type="journal article" date="2014" name="J. Proteomics">
        <title>An enzyme assisted RP-RPLC approach for in-depth analysis of human liver phosphoproteome.</title>
        <authorList>
            <person name="Bian Y."/>
            <person name="Song C."/>
            <person name="Cheng K."/>
            <person name="Dong M."/>
            <person name="Wang F."/>
            <person name="Huang J."/>
            <person name="Sun D."/>
            <person name="Wang L."/>
            <person name="Ye M."/>
            <person name="Zou H."/>
        </authorList>
    </citation>
    <scope>PHOSPHORYLATION [LARGE SCALE ANALYSIS] AT TYR-42</scope>
    <scope>IDENTIFICATION BY MASS SPECTROMETRY [LARGE SCALE ANALYSIS]</scope>
    <source>
        <tissue>Liver</tissue>
    </source>
</reference>
<reference key="15">
    <citation type="journal article" date="2015" name="Proteomics">
        <title>N-terminome analysis of the human mitochondrial proteome.</title>
        <authorList>
            <person name="Vaca Jacome A.S."/>
            <person name="Rabilloud T."/>
            <person name="Schaeffer-Reiss C."/>
            <person name="Rompais M."/>
            <person name="Ayoub D."/>
            <person name="Lane L."/>
            <person name="Bairoch A."/>
            <person name="Van Dorsselaer A."/>
            <person name="Carapito C."/>
        </authorList>
    </citation>
    <scope>IDENTIFICATION BY MASS SPECTROMETRY [LARGE SCALE ANALYSIS]</scope>
</reference>
<reference evidence="16 17" key="16">
    <citation type="journal article" date="2004" name="J. Biol. Chem.">
        <title>Structures of human cytosolic NADP-dependent isocitrate dehydrogenase reveal a novel self-regulatory mechanism of activity.</title>
        <authorList>
            <person name="Xu X."/>
            <person name="Zhao J."/>
            <person name="Xu Z."/>
            <person name="Peng B."/>
            <person name="Huang Q."/>
            <person name="Arnold E."/>
            <person name="Ding J."/>
        </authorList>
    </citation>
    <scope>X-RAY CRYSTALLOGRAPHY (2.4 ANGSTROMS) IN COMPLEXES WITH NADP; ISOCITRATE AND CALCIUM IONS</scope>
    <scope>SUBUNIT</scope>
</reference>
<reference evidence="18" key="17">
    <citation type="journal article" date="2009" name="Nature">
        <title>Cancer-associated IDH1 mutations produce 2-hydroxyglutarate.</title>
        <authorList>
            <person name="Dang L."/>
            <person name="White D.W."/>
            <person name="Gross S."/>
            <person name="Bennett B.D."/>
            <person name="Bittinger M.A."/>
            <person name="Driggers E.M."/>
            <person name="Fantin V.R."/>
            <person name="Jang H.G."/>
            <person name="Jin S."/>
            <person name="Keenan M.C."/>
            <person name="Marks K.M."/>
            <person name="Prins R.M."/>
            <person name="Ward P.S."/>
            <person name="Yen K.E."/>
            <person name="Liau L.M."/>
            <person name="Rabinowitz J.D."/>
            <person name="Cantley L.C."/>
            <person name="Thompson C.B."/>
            <person name="Vander Heiden M.G."/>
            <person name="Su S.M."/>
        </authorList>
    </citation>
    <scope>X-RAY CRYSTALLOGRAPHY (2.1 ANGSTROMS) OF VARIANT HIS-132 IN COMPLEX WITH NADP AND ALPHA-KETOGLUTARATE</scope>
    <scope>FUNCTION</scope>
    <scope>CATALYTIC ACTIVITY</scope>
    <scope>SUBUNIT</scope>
    <scope>COFACTOR</scope>
    <scope>BIOPHYSICOCHEMICAL PROPERTIES</scope>
    <scope>CHARACTERIZATION OF VARIANTS CYS-132; HIS-132; LEU-132 AND SER-132</scope>
    <scope>INVOLVEMENT IN DISEASE</scope>
    <scope>INVOLVEMENT IN GLM</scope>
</reference>
<reference key="18">
    <citation type="journal article" date="2006" name="Science">
        <title>The consensus coding sequences of human breast and colorectal cancers.</title>
        <authorList>
            <person name="Sjoeblom T."/>
            <person name="Jones S."/>
            <person name="Wood L.D."/>
            <person name="Parsons D.W."/>
            <person name="Lin J."/>
            <person name="Barber T.D."/>
            <person name="Mandelker D."/>
            <person name="Leary R.J."/>
            <person name="Ptak J."/>
            <person name="Silliman N."/>
            <person name="Szabo S."/>
            <person name="Buckhaults P."/>
            <person name="Farrell C."/>
            <person name="Meeh P."/>
            <person name="Markowitz S.D."/>
            <person name="Willis J."/>
            <person name="Dawson D."/>
            <person name="Willson J.K.V."/>
            <person name="Gazdar A.F."/>
            <person name="Hartigan J."/>
            <person name="Wu L."/>
            <person name="Liu C."/>
            <person name="Parmigiani G."/>
            <person name="Park B.H."/>
            <person name="Bachman K.E."/>
            <person name="Papadopoulos N."/>
            <person name="Vogelstein B."/>
            <person name="Kinzler K.W."/>
            <person name="Velculescu V.E."/>
        </authorList>
    </citation>
    <scope>VARIANT [LARGE SCALE ANALYSIS] CYS-132</scope>
</reference>
<reference key="19">
    <citation type="journal article" date="2008" name="Science">
        <title>An integrated genomic analysis of human glioblastoma multiforme.</title>
        <authorList>
            <person name="Parsons D.W."/>
            <person name="Jones S."/>
            <person name="Zhang X."/>
            <person name="Lin J.C.-H."/>
            <person name="Leary R.J."/>
            <person name="Angenendt P."/>
            <person name="Mankoo P."/>
            <person name="Carter H."/>
            <person name="Siu I.-M."/>
            <person name="Gallia G.L."/>
            <person name="Olivi A."/>
            <person name="McLendon R."/>
            <person name="Rasheed B.A."/>
            <person name="Keir S."/>
            <person name="Nikolskaya T."/>
            <person name="Nikolsky Y."/>
            <person name="Busam D.A."/>
            <person name="Tekleab H."/>
            <person name="Diaz L.A. Jr."/>
            <person name="Hartigan J."/>
            <person name="Smith D.R."/>
            <person name="Strausberg R.L."/>
            <person name="Marie S.K.N."/>
            <person name="Shinjo S.M.O."/>
            <person name="Yan H."/>
            <person name="Riggins G.J."/>
            <person name="Bigner D.D."/>
            <person name="Karchin R."/>
            <person name="Papadopoulos N."/>
            <person name="Parmigiani G."/>
            <person name="Vogelstein B."/>
            <person name="Velculescu V.E."/>
            <person name="Kinzler K.W."/>
        </authorList>
    </citation>
    <scope>VARIANTS HIS-132 AND SER-132</scope>
</reference>
<reference key="20">
    <citation type="journal article" date="2009" name="Hum. Mutat.">
        <title>IDH1 mutations at residue p.R132 (IDH1(R132)) occur frequently in high-grade gliomas but not in other solid tumors.</title>
        <authorList>
            <person name="Bleeker F.E."/>
            <person name="Lamba S."/>
            <person name="Leenstra S."/>
            <person name="Troost D."/>
            <person name="Hulsebos T."/>
            <person name="Vandertop W.P."/>
            <person name="Frattini M."/>
            <person name="Molinari F."/>
            <person name="Knowles M."/>
            <person name="Cerrato A."/>
            <person name="Rodolfo M."/>
            <person name="Scarpa A."/>
            <person name="Felicioni L."/>
            <person name="Buttitta F."/>
            <person name="Malatesta S."/>
            <person name="Marchetti A."/>
            <person name="Bardelli A."/>
        </authorList>
    </citation>
    <scope>VARIANTS CYS-132; GLY-132 AND LEU-132</scope>
    <scope>INVOLVEMENT IN GLM</scope>
</reference>
<reference key="21">
    <citation type="journal article" date="2015" name="PLoS ONE">
        <title>Mutant IDH1 Dysregulates the Differentiation of Mesenchymal Stem Cells in Association with Gene-Specific Histone Modifications to Cartilage- and Bone-Related Genes.</title>
        <authorList>
            <person name="Jin Y."/>
            <person name="Elalaf H."/>
            <person name="Watanabe M."/>
            <person name="Tamaki S."/>
            <person name="Hineno S."/>
            <person name="Matsunaga K."/>
            <person name="Woltjen K."/>
            <person name="Kobayashi Y."/>
            <person name="Nagata S."/>
            <person name="Ikeya M."/>
            <person name="Kato T. Jr."/>
            <person name="Okamoto T."/>
            <person name="Matsuda S."/>
            <person name="Toguchida J."/>
        </authorList>
    </citation>
    <scope>VARIANTS CYS-132; GLY-132 AND HIS-132</scope>
    <scope>INVOLVEMENT IN DISEASE</scope>
    <scope>CHARACTERIZATION OF VARIANT CYS-132</scope>
</reference>
<protein>
    <recommendedName>
        <fullName>Isocitrate dehydrogenase [NADP] cytoplasmic</fullName>
        <shortName>IDH</shortName>
        <shortName evidence="12">IDH1</shortName>
        <ecNumber evidence="4 9">1.1.1.42</ecNumber>
    </recommendedName>
    <alternativeName>
        <fullName>Cytosolic NADP-isocitrate dehydrogenase</fullName>
    </alternativeName>
    <alternativeName>
        <fullName>IDPc</fullName>
    </alternativeName>
    <alternativeName>
        <fullName>NADP(+)-specific ICDH</fullName>
    </alternativeName>
    <alternativeName>
        <fullName>Oxalosuccinate decarboxylase</fullName>
    </alternativeName>
</protein>
<feature type="initiator methionine" description="Removed" evidence="40">
    <location>
        <position position="1"/>
    </location>
</feature>
<feature type="chain" id="PRO_0000083575" description="Isocitrate dehydrogenase [NADP] cytoplasmic">
    <location>
        <begin position="2"/>
        <end position="414"/>
    </location>
</feature>
<feature type="binding site" evidence="5 9 16 17 18 19 20 21 22 23 24 25 26 27 28 29 30 31 32 33 34 35 36 37 38">
    <location>
        <begin position="75"/>
        <end position="77"/>
    </location>
    <ligand>
        <name>NADP(+)</name>
        <dbReference type="ChEBI" id="CHEBI:58349"/>
    </ligand>
</feature>
<feature type="binding site" description="in other chain" evidence="5 17">
    <location>
        <position position="77"/>
    </location>
    <ligand>
        <name>substrate</name>
        <note>ligand shared between two neighboring subunits</note>
    </ligand>
</feature>
<feature type="binding site" evidence="5 9 16 17 18 19 20 21 22 23 24 25 26 27 28 29 30 31 32 33 35 36 37 38">
    <location>
        <position position="82"/>
    </location>
    <ligand>
        <name>NADP(+)</name>
        <dbReference type="ChEBI" id="CHEBI:58349"/>
    </ligand>
</feature>
<feature type="binding site" description="in other chain" evidence="5 17">
    <location>
        <begin position="94"/>
        <end position="100"/>
    </location>
    <ligand>
        <name>substrate</name>
        <note>ligand shared between two neighboring subunits</note>
    </ligand>
</feature>
<feature type="binding site" description="in other chain" evidence="5 17">
    <location>
        <position position="109"/>
    </location>
    <ligand>
        <name>substrate</name>
        <note>ligand shared between two neighboring subunits</note>
    </ligand>
</feature>
<feature type="binding site" description="in other chain" evidence="5 17">
    <location>
        <position position="132"/>
    </location>
    <ligand>
        <name>substrate</name>
        <note>ligand shared between two neighboring subunits</note>
    </ligand>
</feature>
<feature type="binding site" evidence="5 17">
    <location>
        <position position="212"/>
    </location>
    <ligand>
        <name>substrate</name>
        <note>ligand shared between two neighboring subunits</note>
    </ligand>
</feature>
<feature type="binding site" evidence="14 15 17 18">
    <location>
        <position position="252"/>
    </location>
    <ligand>
        <name>Mn(2+)</name>
        <dbReference type="ChEBI" id="CHEBI:29035"/>
        <note>ligand shared between two neighboring subunits</note>
    </ligand>
</feature>
<feature type="binding site" evidence="5 9 17 18">
    <location>
        <position position="260"/>
    </location>
    <ligand>
        <name>NADP(+)</name>
        <dbReference type="ChEBI" id="CHEBI:58349"/>
    </ligand>
</feature>
<feature type="binding site" description="in other chain" evidence="14 15 17 18">
    <location>
        <position position="275"/>
    </location>
    <ligand>
        <name>Mn(2+)</name>
        <dbReference type="ChEBI" id="CHEBI:29035"/>
        <note>ligand shared between two neighboring subunits</note>
    </ligand>
</feature>
<feature type="binding site" description="in other chain" evidence="14 15 17 18">
    <location>
        <position position="279"/>
    </location>
    <ligand>
        <name>Mn(2+)</name>
        <dbReference type="ChEBI" id="CHEBI:29035"/>
        <note>ligand shared between two neighboring subunits</note>
    </ligand>
</feature>
<feature type="binding site" evidence="5 9 16 17 18 19 20 21 22 23 24 25 26 27 28 29 30 31 32 33 34 35 36 37 38">
    <location>
        <begin position="310"/>
        <end position="315"/>
    </location>
    <ligand>
        <name>NADP(+)</name>
        <dbReference type="ChEBI" id="CHEBI:58349"/>
    </ligand>
</feature>
<feature type="binding site" evidence="5 9 16 17 18 19 20 21 22 23 24 25 26 27 28 29 30 31 32 33 34 35 36 37 38">
    <location>
        <position position="328"/>
    </location>
    <ligand>
        <name>NADP(+)</name>
        <dbReference type="ChEBI" id="CHEBI:58349"/>
    </ligand>
</feature>
<feature type="site" description="Critical for catalysis">
    <location>
        <position position="139"/>
    </location>
</feature>
<feature type="site" description="Critical for catalysis">
    <location>
        <position position="212"/>
    </location>
</feature>
<feature type="modified residue" description="N-acetylserine" evidence="40">
    <location>
        <position position="2"/>
    </location>
</feature>
<feature type="modified residue" description="Phosphotyrosine" evidence="41">
    <location>
        <position position="42"/>
    </location>
</feature>
<feature type="modified residue" description="N6-acetyllysine" evidence="2">
    <location>
        <position position="81"/>
    </location>
</feature>
<feature type="modified residue" description="N6-succinyllysine" evidence="2">
    <location>
        <position position="126"/>
    </location>
</feature>
<feature type="modified residue" description="N6-acetyllysine" evidence="2">
    <location>
        <position position="224"/>
    </location>
</feature>
<feature type="modified residue" description="N6-acetyllysine" evidence="2">
    <location>
        <position position="233"/>
    </location>
</feature>
<feature type="modified residue" description="N6-acetyllysine" evidence="2">
    <location>
        <position position="243"/>
    </location>
</feature>
<feature type="modified residue" description="N6-acetyllysine" evidence="39">
    <location>
        <position position="321"/>
    </location>
</feature>
<feature type="modified residue" description="Phosphoserine" evidence="2">
    <location>
        <position position="389"/>
    </location>
</feature>
<feature type="modified residue" description="N6-succinyllysine" evidence="2">
    <location>
        <position position="400"/>
    </location>
</feature>
<feature type="sequence variant" id="VAR_036013" description="In colorectal cancer and glioma samples; glioblastoma multiforme; somatic mutation; found in patients with cartilaginous tumors; abolishes magnesium binding and alters enzyme activity so that isocitrate is no longer converted to alpha-ketoglutarate but instead alpha-ketoglutarate is converted to R(-)-2-hydroxyglutarate; induces histone methylation; enhances expression of chondrocyte-related genes; disturbs the formation of cartilaginous matrix; inhibits osteogenic differentiation; dbSNP:rs121913499." evidence="6 8 9 10">
    <original>R</original>
    <variation>C</variation>
    <location>
        <position position="132"/>
    </location>
</feature>
<feature type="sequence variant" id="VAR_055454" description="In a glioma sample; glioblastoma multiforme; somatic mutation; found in patients with cartilaginous tumors; dbSNP:rs121913499." evidence="8 10">
    <original>R</original>
    <variation>G</variation>
    <location>
        <position position="132"/>
    </location>
</feature>
<feature type="sequence variant" id="VAR_055455" description="In a glioma sample; glioblastoma multiforme; somatic mutation; found in patients with cartilaginous tumors; abolishes magnesium binding and alters enzyme activity so that isocitrate is no longer converted to alpha-ketoglutarate but instead alpha-ketoglutarate is converted to R(-)-2-hydroxyglutarate; dbSNP:rs121913500." evidence="7 9 10">
    <original>R</original>
    <variation>H</variation>
    <location>
        <position position="132"/>
    </location>
</feature>
<feature type="sequence variant" id="VAR_055456" description="In a glioma sample; glioblastoma multiforme; somatic mutation; abolishes magnesium binding and alters enzyme activity so that isocitrate is no longer converted to alpha-ketoglutarate but instead alpha-ketoglutarate is converted to R(-)-2-hydroxyglutarate; dbSNP:rs121913500." evidence="8 9">
    <original>R</original>
    <variation>L</variation>
    <location>
        <position position="132"/>
    </location>
</feature>
<feature type="sequence variant" id="VAR_055457" description="In a glioma sample; glioblastoma multiforme; somatic mutation; abolishes magnesium binding and alters enzyme activity so that isocitrate is no longer converted to alpha-ketoglutarate but instead alpha-ketoglutarate is converted to R(-)-2-hydroxyglutarate; dbSNP:rs121913499." evidence="7 9">
    <original>R</original>
    <variation>S</variation>
    <location>
        <position position="132"/>
    </location>
</feature>
<feature type="sequence variant" id="VAR_049780" description="In dbSNP:rs34218846.">
    <original>V</original>
    <variation>I</variation>
    <location>
        <position position="178"/>
    </location>
</feature>
<feature type="sequence conflict" description="In Ref. 3; CAB66637." evidence="13" ref="3">
    <original>F</original>
    <variation>I</variation>
    <location>
        <position position="32"/>
    </location>
</feature>
<feature type="sequence conflict" description="In Ref. 3; CAB66637." evidence="13" ref="3">
    <original>K</original>
    <variation>E</variation>
    <location>
        <position position="126"/>
    </location>
</feature>
<feature type="sequence conflict" description="In Ref. 5; CAD97653." evidence="13" ref="5">
    <original>F</original>
    <variation>S</variation>
    <location>
        <position position="172"/>
    </location>
</feature>
<feature type="sequence conflict" description="In Ref. 5; CAD97653." evidence="13" ref="5">
    <original>E</original>
    <variation>G</variation>
    <location>
        <position position="174"/>
    </location>
</feature>
<feature type="sequence conflict" description="In Ref. 1; AAD02918." evidence="13" ref="1">
    <original>K</original>
    <variation>I</variation>
    <location>
        <position position="218"/>
    </location>
</feature>
<feature type="sequence conflict" description="In Ref. 6; AAH93020." evidence="13" ref="6">
    <original>A</original>
    <variation>S</variation>
    <location>
        <position position="307"/>
    </location>
</feature>
<feature type="sequence conflict" description="In Ref. 1; AAD02918." evidence="13" ref="1">
    <original>P</original>
    <variation>L</variation>
    <location>
        <position position="329"/>
    </location>
</feature>
<feature type="sequence conflict" description="In Ref. 1; AAD02918." evidence="13" ref="1">
    <original>K</original>
    <variation>R</variation>
    <location>
        <position position="381"/>
    </location>
</feature>
<feature type="strand" evidence="45">
    <location>
        <begin position="5"/>
        <end position="14"/>
    </location>
</feature>
<feature type="helix" evidence="45">
    <location>
        <begin position="17"/>
        <end position="30"/>
    </location>
</feature>
<feature type="turn" evidence="45">
    <location>
        <begin position="31"/>
        <end position="34"/>
    </location>
</feature>
<feature type="strand" evidence="45">
    <location>
        <begin position="35"/>
        <end position="43"/>
    </location>
</feature>
<feature type="helix" evidence="45">
    <location>
        <begin position="46"/>
        <end position="51"/>
    </location>
</feature>
<feature type="turn" evidence="45">
    <location>
        <begin position="52"/>
        <end position="54"/>
    </location>
</feature>
<feature type="helix" evidence="45">
    <location>
        <begin position="55"/>
        <end position="67"/>
    </location>
</feature>
<feature type="strand" evidence="45">
    <location>
        <begin position="68"/>
        <end position="72"/>
    </location>
</feature>
<feature type="helix" evidence="45">
    <location>
        <begin position="80"/>
        <end position="86"/>
    </location>
</feature>
<feature type="helix" evidence="45">
    <location>
        <begin position="95"/>
        <end position="103"/>
    </location>
</feature>
<feature type="strand" evidence="45">
    <location>
        <begin position="106"/>
        <end position="111"/>
    </location>
</feature>
<feature type="strand" evidence="44">
    <location>
        <begin position="115"/>
        <end position="117"/>
    </location>
</feature>
<feature type="strand" evidence="46">
    <location>
        <begin position="120"/>
        <end position="123"/>
    </location>
</feature>
<feature type="strand" evidence="45">
    <location>
        <begin position="128"/>
        <end position="133"/>
    </location>
</feature>
<feature type="helix" evidence="45">
    <location>
        <begin position="137"/>
        <end position="140"/>
    </location>
</feature>
<feature type="strand" evidence="45">
    <location>
        <begin position="142"/>
        <end position="146"/>
    </location>
</feature>
<feature type="strand" evidence="45">
    <location>
        <begin position="148"/>
        <end position="156"/>
    </location>
</feature>
<feature type="strand" evidence="45">
    <location>
        <begin position="165"/>
        <end position="172"/>
    </location>
</feature>
<feature type="strand" evidence="44">
    <location>
        <begin position="173"/>
        <end position="175"/>
    </location>
</feature>
<feature type="strand" evidence="45">
    <location>
        <begin position="177"/>
        <end position="181"/>
    </location>
</feature>
<feature type="strand" evidence="42">
    <location>
        <begin position="182"/>
        <end position="184"/>
    </location>
</feature>
<feature type="helix" evidence="45">
    <location>
        <begin position="186"/>
        <end position="203"/>
    </location>
</feature>
<feature type="strand" evidence="45">
    <location>
        <begin position="207"/>
        <end position="211"/>
    </location>
</feature>
<feature type="turn" evidence="45">
    <location>
        <begin position="213"/>
        <end position="215"/>
    </location>
</feature>
<feature type="strand" evidence="47">
    <location>
        <begin position="216"/>
        <end position="218"/>
    </location>
</feature>
<feature type="helix" evidence="45">
    <location>
        <begin position="219"/>
        <end position="234"/>
    </location>
</feature>
<feature type="helix" evidence="45">
    <location>
        <begin position="236"/>
        <end position="241"/>
    </location>
</feature>
<feature type="strand" evidence="45">
    <location>
        <begin position="246"/>
        <end position="250"/>
    </location>
</feature>
<feature type="helix" evidence="45">
    <location>
        <begin position="251"/>
        <end position="260"/>
    </location>
</feature>
<feature type="strand" evidence="45">
    <location>
        <begin position="265"/>
        <end position="269"/>
    </location>
</feature>
<feature type="helix" evidence="45">
    <location>
        <begin position="271"/>
        <end position="285"/>
    </location>
</feature>
<feature type="helix" evidence="43">
    <location>
        <begin position="288"/>
        <end position="290"/>
    </location>
</feature>
<feature type="strand" evidence="45">
    <location>
        <begin position="291"/>
        <end position="296"/>
    </location>
</feature>
<feature type="strand" evidence="45">
    <location>
        <begin position="303"/>
        <end position="306"/>
    </location>
</feature>
<feature type="helix" evidence="45">
    <location>
        <begin position="313"/>
        <end position="320"/>
    </location>
</feature>
<feature type="helix" evidence="45">
    <location>
        <begin position="330"/>
        <end position="347"/>
    </location>
</feature>
<feature type="helix" evidence="45">
    <location>
        <begin position="350"/>
        <end position="368"/>
    </location>
</feature>
<feature type="helix" evidence="45">
    <location>
        <begin position="374"/>
        <end position="381"/>
    </location>
</feature>
<feature type="helix" evidence="45">
    <location>
        <begin position="383"/>
        <end position="385"/>
    </location>
</feature>
<feature type="helix" evidence="45">
    <location>
        <begin position="388"/>
        <end position="390"/>
    </location>
</feature>
<feature type="helix" evidence="45">
    <location>
        <begin position="394"/>
        <end position="414"/>
    </location>
</feature>
<evidence type="ECO:0000250" key="1"/>
<evidence type="ECO:0000250" key="2">
    <source>
        <dbReference type="UniProtKB" id="O88844"/>
    </source>
</evidence>
<evidence type="ECO:0000250" key="3">
    <source>
        <dbReference type="UniProtKB" id="Q9XSG3"/>
    </source>
</evidence>
<evidence type="ECO:0000269" key="4">
    <source>
    </source>
</evidence>
<evidence type="ECO:0000269" key="5">
    <source>
    </source>
</evidence>
<evidence type="ECO:0000269" key="6">
    <source>
    </source>
</evidence>
<evidence type="ECO:0000269" key="7">
    <source>
    </source>
</evidence>
<evidence type="ECO:0000269" key="8">
    <source>
    </source>
</evidence>
<evidence type="ECO:0000269" key="9">
    <source>
    </source>
</evidence>
<evidence type="ECO:0000269" key="10">
    <source>
    </source>
</evidence>
<evidence type="ECO:0000303" key="11">
    <source>
    </source>
</evidence>
<evidence type="ECO:0000303" key="12">
    <source>
    </source>
</evidence>
<evidence type="ECO:0000305" key="13"/>
<evidence type="ECO:0000305" key="14">
    <source>
    </source>
</evidence>
<evidence type="ECO:0000305" key="15">
    <source>
    </source>
</evidence>
<evidence type="ECO:0007744" key="16">
    <source>
        <dbReference type="PDB" id="1T09"/>
    </source>
</evidence>
<evidence type="ECO:0007744" key="17">
    <source>
        <dbReference type="PDB" id="1T0L"/>
    </source>
</evidence>
<evidence type="ECO:0007744" key="18">
    <source>
        <dbReference type="PDB" id="3INM"/>
    </source>
</evidence>
<evidence type="ECO:0007744" key="19">
    <source>
        <dbReference type="PDB" id="3MAP"/>
    </source>
</evidence>
<evidence type="ECO:0007744" key="20">
    <source>
        <dbReference type="PDB" id="3MAR"/>
    </source>
</evidence>
<evidence type="ECO:0007744" key="21">
    <source>
        <dbReference type="PDB" id="3MAS"/>
    </source>
</evidence>
<evidence type="ECO:0007744" key="22">
    <source>
        <dbReference type="PDB" id="4I3K"/>
    </source>
</evidence>
<evidence type="ECO:0007744" key="23">
    <source>
        <dbReference type="PDB" id="4I3L"/>
    </source>
</evidence>
<evidence type="ECO:0007744" key="24">
    <source>
        <dbReference type="PDB" id="4KZO"/>
    </source>
</evidence>
<evidence type="ECO:0007744" key="25">
    <source>
        <dbReference type="PDB" id="4L03"/>
    </source>
</evidence>
<evidence type="ECO:0007744" key="26">
    <source>
        <dbReference type="PDB" id="4L04"/>
    </source>
</evidence>
<evidence type="ECO:0007744" key="27">
    <source>
        <dbReference type="PDB" id="4L06"/>
    </source>
</evidence>
<evidence type="ECO:0007744" key="28">
    <source>
        <dbReference type="PDB" id="4UMX"/>
    </source>
</evidence>
<evidence type="ECO:0007744" key="29">
    <source>
        <dbReference type="PDB" id="4UMY"/>
    </source>
</evidence>
<evidence type="ECO:0007744" key="30">
    <source>
        <dbReference type="PDB" id="4XRX"/>
    </source>
</evidence>
<evidence type="ECO:0007744" key="31">
    <source>
        <dbReference type="PDB" id="4XS3"/>
    </source>
</evidence>
<evidence type="ECO:0007744" key="32">
    <source>
        <dbReference type="PDB" id="5DE1"/>
    </source>
</evidence>
<evidence type="ECO:0007744" key="33">
    <source>
        <dbReference type="PDB" id="5L57"/>
    </source>
</evidence>
<evidence type="ECO:0007744" key="34">
    <source>
        <dbReference type="PDB" id="5L58"/>
    </source>
</evidence>
<evidence type="ECO:0007744" key="35">
    <source>
        <dbReference type="PDB" id="5LGE"/>
    </source>
</evidence>
<evidence type="ECO:0007744" key="36">
    <source>
        <dbReference type="PDB" id="5SUN"/>
    </source>
</evidence>
<evidence type="ECO:0007744" key="37">
    <source>
        <dbReference type="PDB" id="5SVF"/>
    </source>
</evidence>
<evidence type="ECO:0007744" key="38">
    <source>
        <dbReference type="PDB" id="5TQH"/>
    </source>
</evidence>
<evidence type="ECO:0007744" key="39">
    <source>
    </source>
</evidence>
<evidence type="ECO:0007744" key="40">
    <source>
    </source>
</evidence>
<evidence type="ECO:0007744" key="41">
    <source>
    </source>
</evidence>
<evidence type="ECO:0007829" key="42">
    <source>
        <dbReference type="PDB" id="3MAR"/>
    </source>
</evidence>
<evidence type="ECO:0007829" key="43">
    <source>
        <dbReference type="PDB" id="4UMX"/>
    </source>
</evidence>
<evidence type="ECO:0007829" key="44">
    <source>
        <dbReference type="PDB" id="6ADG"/>
    </source>
</evidence>
<evidence type="ECO:0007829" key="45">
    <source>
        <dbReference type="PDB" id="6BKX"/>
    </source>
</evidence>
<evidence type="ECO:0007829" key="46">
    <source>
        <dbReference type="PDB" id="6PAY"/>
    </source>
</evidence>
<evidence type="ECO:0007829" key="47">
    <source>
        <dbReference type="PDB" id="6Q6F"/>
    </source>
</evidence>
<proteinExistence type="evidence at protein level"/>
<dbReference type="EC" id="1.1.1.42" evidence="4 9"/>
<dbReference type="EMBL" id="AF020038">
    <property type="protein sequence ID" value="AAD02918.1"/>
    <property type="molecule type" value="mRNA"/>
</dbReference>
<dbReference type="EMBL" id="AF113917">
    <property type="protein sequence ID" value="AAD29284.1"/>
    <property type="molecule type" value="mRNA"/>
</dbReference>
<dbReference type="EMBL" id="AL136702">
    <property type="protein sequence ID" value="CAB66637.1"/>
    <property type="molecule type" value="mRNA"/>
</dbReference>
<dbReference type="EMBL" id="CR541695">
    <property type="protein sequence ID" value="CAG46496.1"/>
    <property type="molecule type" value="mRNA"/>
</dbReference>
<dbReference type="EMBL" id="BX537411">
    <property type="protein sequence ID" value="CAD97653.1"/>
    <property type="molecule type" value="mRNA"/>
</dbReference>
<dbReference type="EMBL" id="AC016697">
    <property type="protein sequence ID" value="AAX93221.1"/>
    <property type="molecule type" value="Genomic_DNA"/>
</dbReference>
<dbReference type="EMBL" id="CH471063">
    <property type="protein sequence ID" value="EAW70439.1"/>
    <property type="molecule type" value="Genomic_DNA"/>
</dbReference>
<dbReference type="EMBL" id="BC012846">
    <property type="protein sequence ID" value="AAH12846.1"/>
    <property type="molecule type" value="mRNA"/>
</dbReference>
<dbReference type="EMBL" id="BC093020">
    <property type="protein sequence ID" value="AAH93020.1"/>
    <property type="molecule type" value="mRNA"/>
</dbReference>
<dbReference type="EMBL" id="U62389">
    <property type="protein sequence ID" value="AAB17375.1"/>
    <property type="molecule type" value="mRNA"/>
</dbReference>
<dbReference type="CCDS" id="CCDS2381.1"/>
<dbReference type="PIR" id="T46280">
    <property type="entry name" value="T46280"/>
</dbReference>
<dbReference type="RefSeq" id="NP_001269315.1">
    <property type="nucleotide sequence ID" value="NM_001282386.1"/>
</dbReference>
<dbReference type="RefSeq" id="NP_001269316.1">
    <property type="nucleotide sequence ID" value="NM_001282387.1"/>
</dbReference>
<dbReference type="RefSeq" id="NP_005887.2">
    <property type="nucleotide sequence ID" value="NM_005896.3"/>
</dbReference>
<dbReference type="PDB" id="1T09">
    <property type="method" value="X-ray"/>
    <property type="resolution" value="2.70 A"/>
    <property type="chains" value="A/B=1-414"/>
</dbReference>
<dbReference type="PDB" id="1T0L">
    <property type="method" value="X-ray"/>
    <property type="resolution" value="2.41 A"/>
    <property type="chains" value="A/B/C/D=1-414"/>
</dbReference>
<dbReference type="PDB" id="3INM">
    <property type="method" value="X-ray"/>
    <property type="resolution" value="2.10 A"/>
    <property type="chains" value="A/B/C=1-414"/>
</dbReference>
<dbReference type="PDB" id="3MAP">
    <property type="method" value="X-ray"/>
    <property type="resolution" value="2.80 A"/>
    <property type="chains" value="A/B=1-414"/>
</dbReference>
<dbReference type="PDB" id="3MAR">
    <property type="method" value="X-ray"/>
    <property type="resolution" value="3.41 A"/>
    <property type="chains" value="A/B=1-414"/>
</dbReference>
<dbReference type="PDB" id="3MAS">
    <property type="method" value="X-ray"/>
    <property type="resolution" value="3.20 A"/>
    <property type="chains" value="A/B=1-414"/>
</dbReference>
<dbReference type="PDB" id="4I3K">
    <property type="method" value="X-ray"/>
    <property type="resolution" value="3.31 A"/>
    <property type="chains" value="A/B=1-414"/>
</dbReference>
<dbReference type="PDB" id="4I3L">
    <property type="method" value="X-ray"/>
    <property type="resolution" value="3.29 A"/>
    <property type="chains" value="A/B=1-414"/>
</dbReference>
<dbReference type="PDB" id="4KZO">
    <property type="method" value="X-ray"/>
    <property type="resolution" value="2.20 A"/>
    <property type="chains" value="A/B/C=1-414"/>
</dbReference>
<dbReference type="PDB" id="4L03">
    <property type="method" value="X-ray"/>
    <property type="resolution" value="2.10 A"/>
    <property type="chains" value="A/B/C=1-414"/>
</dbReference>
<dbReference type="PDB" id="4L04">
    <property type="method" value="X-ray"/>
    <property type="resolution" value="2.87 A"/>
    <property type="chains" value="A/B/C/D/E/F=1-414"/>
</dbReference>
<dbReference type="PDB" id="4L06">
    <property type="method" value="X-ray"/>
    <property type="resolution" value="2.28 A"/>
    <property type="chains" value="A/B/C/D/E/F=1-414"/>
</dbReference>
<dbReference type="PDB" id="4UMX">
    <property type="method" value="X-ray"/>
    <property type="resolution" value="1.88 A"/>
    <property type="chains" value="A/B=1-414"/>
</dbReference>
<dbReference type="PDB" id="4UMY">
    <property type="method" value="X-ray"/>
    <property type="resolution" value="2.07 A"/>
    <property type="chains" value="A/B=1-414"/>
</dbReference>
<dbReference type="PDB" id="4XRX">
    <property type="method" value="X-ray"/>
    <property type="resolution" value="3.20 A"/>
    <property type="chains" value="A/B=1-414"/>
</dbReference>
<dbReference type="PDB" id="4XS3">
    <property type="method" value="X-ray"/>
    <property type="resolution" value="3.29 A"/>
    <property type="chains" value="A/B=1-414"/>
</dbReference>
<dbReference type="PDB" id="5DE1">
    <property type="method" value="X-ray"/>
    <property type="resolution" value="2.25 A"/>
    <property type="chains" value="A/B=2-414"/>
</dbReference>
<dbReference type="PDB" id="5GIR">
    <property type="method" value="X-ray"/>
    <property type="resolution" value="1.93 A"/>
    <property type="chains" value="C/D=126-137"/>
</dbReference>
<dbReference type="PDB" id="5K10">
    <property type="method" value="EM"/>
    <property type="resolution" value="3.80 A"/>
    <property type="chains" value="A/B=3-413"/>
</dbReference>
<dbReference type="PDB" id="5K11">
    <property type="method" value="EM"/>
    <property type="resolution" value="3.80 A"/>
    <property type="chains" value="A/B=3-413"/>
</dbReference>
<dbReference type="PDB" id="5L57">
    <property type="method" value="X-ray"/>
    <property type="resolution" value="2.69 A"/>
    <property type="chains" value="A=1-414"/>
</dbReference>
<dbReference type="PDB" id="5L58">
    <property type="method" value="X-ray"/>
    <property type="resolution" value="3.04 A"/>
    <property type="chains" value="A=1-414"/>
</dbReference>
<dbReference type="PDB" id="5LGE">
    <property type="method" value="X-ray"/>
    <property type="resolution" value="2.70 A"/>
    <property type="chains" value="A/B/C/D=1-414"/>
</dbReference>
<dbReference type="PDB" id="5SUN">
    <property type="method" value="X-ray"/>
    <property type="resolution" value="2.48 A"/>
    <property type="chains" value="A/B=1-414"/>
</dbReference>
<dbReference type="PDB" id="5SVF">
    <property type="method" value="X-ray"/>
    <property type="resolution" value="2.34 A"/>
    <property type="chains" value="A/B/C/D=1-414"/>
</dbReference>
<dbReference type="PDB" id="5TQH">
    <property type="method" value="X-ray"/>
    <property type="resolution" value="2.20 A"/>
    <property type="chains" value="A/B/C/D=1-414"/>
</dbReference>
<dbReference type="PDB" id="5YFM">
    <property type="method" value="X-ray"/>
    <property type="resolution" value="2.40 A"/>
    <property type="chains" value="A/B/C=1-414"/>
</dbReference>
<dbReference type="PDB" id="5YFN">
    <property type="method" value="X-ray"/>
    <property type="resolution" value="2.50 A"/>
    <property type="chains" value="A/B=1-414"/>
</dbReference>
<dbReference type="PDB" id="6ADG">
    <property type="method" value="X-ray"/>
    <property type="resolution" value="3.00 A"/>
    <property type="chains" value="A/B/C=1-414"/>
</dbReference>
<dbReference type="PDB" id="6B0Z">
    <property type="method" value="X-ray"/>
    <property type="resolution" value="2.33 A"/>
    <property type="chains" value="A/B/C/D=1-414"/>
</dbReference>
<dbReference type="PDB" id="6BKX">
    <property type="method" value="X-ray"/>
    <property type="resolution" value="1.65 A"/>
    <property type="chains" value="A/B/C=1-414"/>
</dbReference>
<dbReference type="PDB" id="6BKY">
    <property type="method" value="X-ray"/>
    <property type="resolution" value="2.17 A"/>
    <property type="chains" value="A/B/C/D/E/F=1-414"/>
</dbReference>
<dbReference type="PDB" id="6BKZ">
    <property type="method" value="X-ray"/>
    <property type="resolution" value="2.01 A"/>
    <property type="chains" value="A/B=1-414"/>
</dbReference>
<dbReference type="PDB" id="6BL0">
    <property type="method" value="X-ray"/>
    <property type="resolution" value="2.17 A"/>
    <property type="chains" value="A/B/C=1-414"/>
</dbReference>
<dbReference type="PDB" id="6BL1">
    <property type="method" value="X-ray"/>
    <property type="resolution" value="2.02 A"/>
    <property type="chains" value="A/B/C=1-414"/>
</dbReference>
<dbReference type="PDB" id="6BL2">
    <property type="method" value="X-ray"/>
    <property type="resolution" value="1.92 A"/>
    <property type="chains" value="A/B/C=1-414"/>
</dbReference>
<dbReference type="PDB" id="6IO0">
    <property type="method" value="X-ray"/>
    <property type="resolution" value="2.20 A"/>
    <property type="chains" value="A/B=1-414"/>
</dbReference>
<dbReference type="PDB" id="6O2Y">
    <property type="method" value="X-ray"/>
    <property type="resolution" value="2.80 A"/>
    <property type="chains" value="A/B/C=1-414"/>
</dbReference>
<dbReference type="PDB" id="6O2Z">
    <property type="method" value="X-ray"/>
    <property type="resolution" value="2.50 A"/>
    <property type="chains" value="A/B=1-414"/>
</dbReference>
<dbReference type="PDB" id="6PAY">
    <property type="method" value="X-ray"/>
    <property type="resolution" value="2.20 A"/>
    <property type="chains" value="A/B/C/D=1-414"/>
</dbReference>
<dbReference type="PDB" id="6Q6F">
    <property type="method" value="X-ray"/>
    <property type="resolution" value="3.30 A"/>
    <property type="chains" value="A/B=1-414"/>
</dbReference>
<dbReference type="PDB" id="6U4J">
    <property type="method" value="X-ray"/>
    <property type="resolution" value="2.11 A"/>
    <property type="chains" value="A/B=1-414"/>
</dbReference>
<dbReference type="PDB" id="6VEI">
    <property type="method" value="X-ray"/>
    <property type="resolution" value="2.10 A"/>
    <property type="chains" value="A/B=1-414"/>
</dbReference>
<dbReference type="PDB" id="6VG0">
    <property type="method" value="X-ray"/>
    <property type="resolution" value="2.66 A"/>
    <property type="chains" value="A/B/C=1-414"/>
</dbReference>
<dbReference type="PDB" id="7PJM">
    <property type="method" value="X-ray"/>
    <property type="resolution" value="2.10 A"/>
    <property type="chains" value="A/B/C=1-414"/>
</dbReference>
<dbReference type="PDB" id="7PJN">
    <property type="method" value="X-ray"/>
    <property type="resolution" value="2.45 A"/>
    <property type="chains" value="A/B/C/D=1-414"/>
</dbReference>
<dbReference type="PDB" id="8BAY">
    <property type="method" value="X-ray"/>
    <property type="resolution" value="2.35 A"/>
    <property type="chains" value="A/B/C=1-414"/>
</dbReference>
<dbReference type="PDB" id="8HB9">
    <property type="method" value="X-ray"/>
    <property type="resolution" value="2.80 A"/>
    <property type="chains" value="AAA/BBB/CCC/DDD=1-414"/>
</dbReference>
<dbReference type="PDB" id="8T7D">
    <property type="method" value="X-ray"/>
    <property type="resolution" value="3.44 A"/>
    <property type="chains" value="A/B/C/D=1-414"/>
</dbReference>
<dbReference type="PDB" id="8T7N">
    <property type="method" value="X-ray"/>
    <property type="resolution" value="2.26 A"/>
    <property type="chains" value="A/B=1-414"/>
</dbReference>
<dbReference type="PDB" id="8T7O">
    <property type="method" value="X-ray"/>
    <property type="resolution" value="2.05 A"/>
    <property type="chains" value="A/B=1-414"/>
</dbReference>
<dbReference type="PDB" id="8VH9">
    <property type="method" value="X-ray"/>
    <property type="resolution" value="2.13 A"/>
    <property type="chains" value="A/B=1-414"/>
</dbReference>
<dbReference type="PDB" id="8VHA">
    <property type="method" value="X-ray"/>
    <property type="resolution" value="2.28 A"/>
    <property type="chains" value="A/B/C/D=1-414"/>
</dbReference>
<dbReference type="PDB" id="8VHB">
    <property type="method" value="X-ray"/>
    <property type="resolution" value="1.89 A"/>
    <property type="chains" value="A/B/C/D=1-414"/>
</dbReference>
<dbReference type="PDB" id="8VHC">
    <property type="method" value="X-ray"/>
    <property type="resolution" value="2.44 A"/>
    <property type="chains" value="A/B=1-414"/>
</dbReference>
<dbReference type="PDB" id="8VHD">
    <property type="method" value="X-ray"/>
    <property type="resolution" value="2.38 A"/>
    <property type="chains" value="A/B/C/D=1-414"/>
</dbReference>
<dbReference type="PDB" id="8VHE">
    <property type="method" value="X-ray"/>
    <property type="resolution" value="2.16 A"/>
    <property type="chains" value="A/B/C/D=1-414"/>
</dbReference>
<dbReference type="PDBsum" id="1T09"/>
<dbReference type="PDBsum" id="1T0L"/>
<dbReference type="PDBsum" id="3INM"/>
<dbReference type="PDBsum" id="3MAP"/>
<dbReference type="PDBsum" id="3MAR"/>
<dbReference type="PDBsum" id="3MAS"/>
<dbReference type="PDBsum" id="4I3K"/>
<dbReference type="PDBsum" id="4I3L"/>
<dbReference type="PDBsum" id="4KZO"/>
<dbReference type="PDBsum" id="4L03"/>
<dbReference type="PDBsum" id="4L04"/>
<dbReference type="PDBsum" id="4L06"/>
<dbReference type="PDBsum" id="4UMX"/>
<dbReference type="PDBsum" id="4UMY"/>
<dbReference type="PDBsum" id="4XRX"/>
<dbReference type="PDBsum" id="4XS3"/>
<dbReference type="PDBsum" id="5DE1"/>
<dbReference type="PDBsum" id="5GIR"/>
<dbReference type="PDBsum" id="5K10"/>
<dbReference type="PDBsum" id="5K11"/>
<dbReference type="PDBsum" id="5L57"/>
<dbReference type="PDBsum" id="5L58"/>
<dbReference type="PDBsum" id="5LGE"/>
<dbReference type="PDBsum" id="5SUN"/>
<dbReference type="PDBsum" id="5SVF"/>
<dbReference type="PDBsum" id="5TQH"/>
<dbReference type="PDBsum" id="5YFM"/>
<dbReference type="PDBsum" id="5YFN"/>
<dbReference type="PDBsum" id="6ADG"/>
<dbReference type="PDBsum" id="6B0Z"/>
<dbReference type="PDBsum" id="6BKX"/>
<dbReference type="PDBsum" id="6BKY"/>
<dbReference type="PDBsum" id="6BKZ"/>
<dbReference type="PDBsum" id="6BL0"/>
<dbReference type="PDBsum" id="6BL1"/>
<dbReference type="PDBsum" id="6BL2"/>
<dbReference type="PDBsum" id="6IO0"/>
<dbReference type="PDBsum" id="6O2Y"/>
<dbReference type="PDBsum" id="6O2Z"/>
<dbReference type="PDBsum" id="6PAY"/>
<dbReference type="PDBsum" id="6Q6F"/>
<dbReference type="PDBsum" id="6U4J"/>
<dbReference type="PDBsum" id="6VEI"/>
<dbReference type="PDBsum" id="6VG0"/>
<dbReference type="PDBsum" id="7PJM"/>
<dbReference type="PDBsum" id="7PJN"/>
<dbReference type="PDBsum" id="8BAY"/>
<dbReference type="PDBsum" id="8HB9"/>
<dbReference type="PDBsum" id="8T7D"/>
<dbReference type="PDBsum" id="8T7N"/>
<dbReference type="PDBsum" id="8T7O"/>
<dbReference type="PDBsum" id="8VH9"/>
<dbReference type="PDBsum" id="8VHA"/>
<dbReference type="PDBsum" id="8VHB"/>
<dbReference type="PDBsum" id="8VHC"/>
<dbReference type="PDBsum" id="8VHD"/>
<dbReference type="PDBsum" id="8VHE"/>
<dbReference type="EMDB" id="EMD-8192"/>
<dbReference type="EMDB" id="EMD-8193"/>
<dbReference type="SMR" id="O75874"/>
<dbReference type="BioGRID" id="109643">
    <property type="interactions" value="125"/>
</dbReference>
<dbReference type="CORUM" id="O75874"/>
<dbReference type="DIP" id="DIP-59311N"/>
<dbReference type="FunCoup" id="O75874">
    <property type="interactions" value="1887"/>
</dbReference>
<dbReference type="IntAct" id="O75874">
    <property type="interactions" value="40"/>
</dbReference>
<dbReference type="MINT" id="O75874"/>
<dbReference type="STRING" id="9606.ENSP00000390265"/>
<dbReference type="BindingDB" id="O75874"/>
<dbReference type="ChEMBL" id="CHEMBL2007625"/>
<dbReference type="DrugBank" id="DB13874">
    <property type="generic name" value="Enasidenib"/>
</dbReference>
<dbReference type="DrugBank" id="DB09374">
    <property type="generic name" value="Indocyanine green acid form"/>
</dbReference>
<dbReference type="DrugBank" id="DB01727">
    <property type="generic name" value="Isocitric Acid"/>
</dbReference>
<dbReference type="DrugBank" id="DB14568">
    <property type="generic name" value="Ivosidenib"/>
</dbReference>
<dbReference type="DrugBank" id="DB03461">
    <property type="generic name" value="Nicotinamide adenine dinucleotide phosphate"/>
</dbReference>
<dbReference type="DrugBank" id="DB16267">
    <property type="generic name" value="Olutasidenib"/>
</dbReference>
<dbReference type="DrugBank" id="DB17097">
    <property type="generic name" value="Vorasidenib"/>
</dbReference>
<dbReference type="DrugCentral" id="O75874"/>
<dbReference type="GuidetoPHARMACOLOGY" id="2884"/>
<dbReference type="GlyGen" id="O75874">
    <property type="glycosylation" value="2 sites, 1 O-linked glycan (2 sites)"/>
</dbReference>
<dbReference type="iPTMnet" id="O75874"/>
<dbReference type="MetOSite" id="O75874"/>
<dbReference type="PhosphoSitePlus" id="O75874"/>
<dbReference type="SwissPalm" id="O75874"/>
<dbReference type="BioMuta" id="IDH1"/>
<dbReference type="OGP" id="O75874"/>
<dbReference type="REPRODUCTION-2DPAGE" id="IPI00027223"/>
<dbReference type="CPTAC" id="CPTAC-2741"/>
<dbReference type="jPOST" id="O75874"/>
<dbReference type="MassIVE" id="O75874"/>
<dbReference type="PaxDb" id="9606-ENSP00000390265"/>
<dbReference type="PeptideAtlas" id="O75874"/>
<dbReference type="PRIDE" id="O75874"/>
<dbReference type="ProteomicsDB" id="50234"/>
<dbReference type="Pumba" id="O75874"/>
<dbReference type="ABCD" id="O75874">
    <property type="antibodies" value="4 sequenced antibodies"/>
</dbReference>
<dbReference type="Antibodypedia" id="34198">
    <property type="antibodies" value="1036 antibodies from 47 providers"/>
</dbReference>
<dbReference type="DNASU" id="3417"/>
<dbReference type="Ensembl" id="ENST00000345146.7">
    <property type="protein sequence ID" value="ENSP00000260985.2"/>
    <property type="gene ID" value="ENSG00000138413.14"/>
</dbReference>
<dbReference type="Ensembl" id="ENST00000415913.5">
    <property type="protein sequence ID" value="ENSP00000390265.1"/>
    <property type="gene ID" value="ENSG00000138413.14"/>
</dbReference>
<dbReference type="Ensembl" id="ENST00000446179.5">
    <property type="protein sequence ID" value="ENSP00000410513.1"/>
    <property type="gene ID" value="ENSG00000138413.14"/>
</dbReference>
<dbReference type="GeneID" id="3417"/>
<dbReference type="KEGG" id="hsa:3417"/>
<dbReference type="MANE-Select" id="ENST00000345146.7">
    <property type="protein sequence ID" value="ENSP00000260985.2"/>
    <property type="RefSeq nucleotide sequence ID" value="NM_005896.4"/>
    <property type="RefSeq protein sequence ID" value="NP_005887.2"/>
</dbReference>
<dbReference type="AGR" id="HGNC:5382"/>
<dbReference type="CTD" id="3417"/>
<dbReference type="DisGeNET" id="3417"/>
<dbReference type="GeneCards" id="IDH1"/>
<dbReference type="HGNC" id="HGNC:5382">
    <property type="gene designation" value="IDH1"/>
</dbReference>
<dbReference type="HPA" id="ENSG00000138413">
    <property type="expression patterns" value="Tissue enhanced (liver)"/>
</dbReference>
<dbReference type="MalaCards" id="IDH1"/>
<dbReference type="MIM" id="137800">
    <property type="type" value="phenotype"/>
</dbReference>
<dbReference type="MIM" id="147700">
    <property type="type" value="gene"/>
</dbReference>
<dbReference type="neXtProt" id="NX_O75874"/>
<dbReference type="OpenTargets" id="ENSG00000138413"/>
<dbReference type="Orphanet" id="86845">
    <property type="disease" value="Acute myeloid leukaemia with myelodysplasia-related features"/>
</dbReference>
<dbReference type="Orphanet" id="251579">
    <property type="disease" value="Giant cell glioblastoma"/>
</dbReference>
<dbReference type="Orphanet" id="251576">
    <property type="disease" value="Gliosarcoma"/>
</dbReference>
<dbReference type="Orphanet" id="163634">
    <property type="disease" value="Maffucci syndrome"/>
</dbReference>
<dbReference type="Orphanet" id="99646">
    <property type="disease" value="Metaphyseal chondromatosis with D-2-hydroxyglutaric aciduria"/>
</dbReference>
<dbReference type="Orphanet" id="296">
    <property type="disease" value="Ollier disease"/>
</dbReference>
<dbReference type="PharmGKB" id="PA29630"/>
<dbReference type="VEuPathDB" id="HostDB:ENSG00000138413"/>
<dbReference type="eggNOG" id="KOG1526">
    <property type="taxonomic scope" value="Eukaryota"/>
</dbReference>
<dbReference type="GeneTree" id="ENSGT00390000012547"/>
<dbReference type="HOGENOM" id="CLU_023296_1_1_1"/>
<dbReference type="InParanoid" id="O75874"/>
<dbReference type="OMA" id="HGTVQRH"/>
<dbReference type="OrthoDB" id="248923at2759"/>
<dbReference type="PAN-GO" id="O75874">
    <property type="GO annotations" value="6 GO annotations based on evolutionary models"/>
</dbReference>
<dbReference type="PhylomeDB" id="O75874"/>
<dbReference type="TreeFam" id="TF300428"/>
<dbReference type="BioCyc" id="MetaCyc:HS06502-MONOMER"/>
<dbReference type="BRENDA" id="1.1.1.42">
    <property type="organism ID" value="2681"/>
</dbReference>
<dbReference type="PathwayCommons" id="O75874"/>
<dbReference type="Reactome" id="R-HSA-2978092">
    <property type="pathway name" value="Abnormal conversion of 2-oxoglutarate to 2-hydroxyglutarate"/>
</dbReference>
<dbReference type="Reactome" id="R-HSA-389542">
    <property type="pathway name" value="NADPH regeneration"/>
</dbReference>
<dbReference type="Reactome" id="R-HSA-6798695">
    <property type="pathway name" value="Neutrophil degranulation"/>
</dbReference>
<dbReference type="Reactome" id="R-HSA-9033241">
    <property type="pathway name" value="Peroxisomal protein import"/>
</dbReference>
<dbReference type="Reactome" id="R-HSA-9818025">
    <property type="pathway name" value="NFE2L2 regulating TCA cycle genes"/>
</dbReference>
<dbReference type="SABIO-RK" id="O75874"/>
<dbReference type="SignaLink" id="O75874"/>
<dbReference type="SIGNOR" id="O75874"/>
<dbReference type="BioGRID-ORCS" id="3417">
    <property type="hits" value="19 hits in 1157 CRISPR screens"/>
</dbReference>
<dbReference type="ChiTaRS" id="IDH1">
    <property type="organism name" value="human"/>
</dbReference>
<dbReference type="EvolutionaryTrace" id="O75874"/>
<dbReference type="GeneWiki" id="IDH1"/>
<dbReference type="GenomeRNAi" id="3417"/>
<dbReference type="Pharos" id="O75874">
    <property type="development level" value="Tclin"/>
</dbReference>
<dbReference type="PRO" id="PR:O75874"/>
<dbReference type="Proteomes" id="UP000005640">
    <property type="component" value="Chromosome 2"/>
</dbReference>
<dbReference type="RNAct" id="O75874">
    <property type="molecule type" value="protein"/>
</dbReference>
<dbReference type="Bgee" id="ENSG00000138413">
    <property type="expression patterns" value="Expressed in corpus epididymis and 212 other cell types or tissues"/>
</dbReference>
<dbReference type="ExpressionAtlas" id="O75874">
    <property type="expression patterns" value="baseline and differential"/>
</dbReference>
<dbReference type="GO" id="GO:0005737">
    <property type="term" value="C:cytoplasm"/>
    <property type="evidence" value="ECO:0000314"/>
    <property type="project" value="LIFEdb"/>
</dbReference>
<dbReference type="GO" id="GO:0005829">
    <property type="term" value="C:cytosol"/>
    <property type="evidence" value="ECO:0000314"/>
    <property type="project" value="UniProtKB"/>
</dbReference>
<dbReference type="GO" id="GO:0070062">
    <property type="term" value="C:extracellular exosome"/>
    <property type="evidence" value="ECO:0007005"/>
    <property type="project" value="UniProtKB"/>
</dbReference>
<dbReference type="GO" id="GO:0005576">
    <property type="term" value="C:extracellular region"/>
    <property type="evidence" value="ECO:0000304"/>
    <property type="project" value="Reactome"/>
</dbReference>
<dbReference type="GO" id="GO:1904813">
    <property type="term" value="C:ficolin-1-rich granule lumen"/>
    <property type="evidence" value="ECO:0000304"/>
    <property type="project" value="Reactome"/>
</dbReference>
<dbReference type="GO" id="GO:0005739">
    <property type="term" value="C:mitochondrion"/>
    <property type="evidence" value="ECO:0000318"/>
    <property type="project" value="GO_Central"/>
</dbReference>
<dbReference type="GO" id="GO:0005782">
    <property type="term" value="C:peroxisomal matrix"/>
    <property type="evidence" value="ECO:0000304"/>
    <property type="project" value="Reactome"/>
</dbReference>
<dbReference type="GO" id="GO:0005777">
    <property type="term" value="C:peroxisome"/>
    <property type="evidence" value="ECO:0000314"/>
    <property type="project" value="UniProtKB"/>
</dbReference>
<dbReference type="GO" id="GO:0034774">
    <property type="term" value="C:secretory granule lumen"/>
    <property type="evidence" value="ECO:0000304"/>
    <property type="project" value="Reactome"/>
</dbReference>
<dbReference type="GO" id="GO:1904724">
    <property type="term" value="C:tertiary granule lumen"/>
    <property type="evidence" value="ECO:0000304"/>
    <property type="project" value="Reactome"/>
</dbReference>
<dbReference type="GO" id="GO:0045296">
    <property type="term" value="F:cadherin binding"/>
    <property type="evidence" value="ECO:0007005"/>
    <property type="project" value="BHF-UCL"/>
</dbReference>
<dbReference type="GO" id="GO:0042802">
    <property type="term" value="F:identical protein binding"/>
    <property type="evidence" value="ECO:0000353"/>
    <property type="project" value="IntAct"/>
</dbReference>
<dbReference type="GO" id="GO:0004450">
    <property type="term" value="F:isocitrate dehydrogenase (NADP+) activity"/>
    <property type="evidence" value="ECO:0000314"/>
    <property type="project" value="UniProtKB"/>
</dbReference>
<dbReference type="GO" id="GO:0000287">
    <property type="term" value="F:magnesium ion binding"/>
    <property type="evidence" value="ECO:0000314"/>
    <property type="project" value="UniProtKB"/>
</dbReference>
<dbReference type="GO" id="GO:0051287">
    <property type="term" value="F:NAD binding"/>
    <property type="evidence" value="ECO:0007669"/>
    <property type="project" value="InterPro"/>
</dbReference>
<dbReference type="GO" id="GO:0050661">
    <property type="term" value="F:NADP binding"/>
    <property type="evidence" value="ECO:0007669"/>
    <property type="project" value="Ensembl"/>
</dbReference>
<dbReference type="GO" id="GO:0042803">
    <property type="term" value="F:protein homodimerization activity"/>
    <property type="evidence" value="ECO:0000353"/>
    <property type="project" value="UniProtKB"/>
</dbReference>
<dbReference type="GO" id="GO:0006103">
    <property type="term" value="P:2-oxoglutarate metabolic process"/>
    <property type="evidence" value="ECO:0000314"/>
    <property type="project" value="UniProtKB"/>
</dbReference>
<dbReference type="GO" id="GO:0008585">
    <property type="term" value="P:female gonad development"/>
    <property type="evidence" value="ECO:0007669"/>
    <property type="project" value="Ensembl"/>
</dbReference>
<dbReference type="GO" id="GO:0006749">
    <property type="term" value="P:glutathione metabolic process"/>
    <property type="evidence" value="ECO:0007669"/>
    <property type="project" value="Ensembl"/>
</dbReference>
<dbReference type="GO" id="GO:0006097">
    <property type="term" value="P:glyoxylate cycle"/>
    <property type="evidence" value="ECO:0007669"/>
    <property type="project" value="UniProtKB-KW"/>
</dbReference>
<dbReference type="GO" id="GO:0006102">
    <property type="term" value="P:isocitrate metabolic process"/>
    <property type="evidence" value="ECO:0000314"/>
    <property type="project" value="UniProtKB"/>
</dbReference>
<dbReference type="GO" id="GO:0006739">
    <property type="term" value="P:NADP metabolic process"/>
    <property type="evidence" value="ECO:0000318"/>
    <property type="project" value="GO_Central"/>
</dbReference>
<dbReference type="GO" id="GO:0006740">
    <property type="term" value="P:NADPH regeneration"/>
    <property type="evidence" value="ECO:0007669"/>
    <property type="project" value="Ensembl"/>
</dbReference>
<dbReference type="GO" id="GO:0071071">
    <property type="term" value="P:regulation of phospholipid biosynthetic process"/>
    <property type="evidence" value="ECO:0007669"/>
    <property type="project" value="Ensembl"/>
</dbReference>
<dbReference type="GO" id="GO:0060696">
    <property type="term" value="P:regulation of phospholipid catabolic process"/>
    <property type="evidence" value="ECO:0007669"/>
    <property type="project" value="Ensembl"/>
</dbReference>
<dbReference type="GO" id="GO:0006979">
    <property type="term" value="P:response to oxidative stress"/>
    <property type="evidence" value="ECO:0007669"/>
    <property type="project" value="Ensembl"/>
</dbReference>
<dbReference type="GO" id="GO:0048545">
    <property type="term" value="P:response to steroid hormone"/>
    <property type="evidence" value="ECO:0007669"/>
    <property type="project" value="Ensembl"/>
</dbReference>
<dbReference type="GO" id="GO:0006099">
    <property type="term" value="P:tricarboxylic acid cycle"/>
    <property type="evidence" value="ECO:0007669"/>
    <property type="project" value="UniProtKB-KW"/>
</dbReference>
<dbReference type="FunFam" id="3.40.718.10:FF:000002">
    <property type="entry name" value="Isocitrate dehydrogenase [NADP]"/>
    <property type="match status" value="1"/>
</dbReference>
<dbReference type="Gene3D" id="3.40.718.10">
    <property type="entry name" value="Isopropylmalate Dehydrogenase"/>
    <property type="match status" value="1"/>
</dbReference>
<dbReference type="InterPro" id="IPR019818">
    <property type="entry name" value="IsoCit/isopropylmalate_DH_CS"/>
</dbReference>
<dbReference type="InterPro" id="IPR004790">
    <property type="entry name" value="Isocitrate_DH_NADP"/>
</dbReference>
<dbReference type="InterPro" id="IPR024084">
    <property type="entry name" value="IsoPropMal-DH-like_dom"/>
</dbReference>
<dbReference type="NCBIfam" id="TIGR00127">
    <property type="entry name" value="nadp_idh_euk"/>
    <property type="match status" value="1"/>
</dbReference>
<dbReference type="NCBIfam" id="NF006156">
    <property type="entry name" value="PRK08299.1"/>
    <property type="match status" value="1"/>
</dbReference>
<dbReference type="PANTHER" id="PTHR11822:SF28">
    <property type="entry name" value="ISOCITRATE DEHYDROGENASE [NADP] CYTOPLASMIC"/>
    <property type="match status" value="1"/>
</dbReference>
<dbReference type="PANTHER" id="PTHR11822">
    <property type="entry name" value="NADP-SPECIFIC ISOCITRATE DEHYDROGENASE"/>
    <property type="match status" value="1"/>
</dbReference>
<dbReference type="Pfam" id="PF00180">
    <property type="entry name" value="Iso_dh"/>
    <property type="match status" value="1"/>
</dbReference>
<dbReference type="PIRSF" id="PIRSF000108">
    <property type="entry name" value="IDH_NADP"/>
    <property type="match status" value="1"/>
</dbReference>
<dbReference type="SMART" id="SM01329">
    <property type="entry name" value="Iso_dh"/>
    <property type="match status" value="1"/>
</dbReference>
<dbReference type="SUPFAM" id="SSF53659">
    <property type="entry name" value="Isocitrate/Isopropylmalate dehydrogenase-like"/>
    <property type="match status" value="1"/>
</dbReference>
<dbReference type="PROSITE" id="PS00470">
    <property type="entry name" value="IDH_IMDH"/>
    <property type="match status" value="1"/>
</dbReference>
<sequence>MSKKISGGSVVEMQGDEMTRIIWELIKEKLIFPYVELDLHSYDLGIENRDATNDQVTKDAAEAIKKHNVGVKCATITPDEKRVEEFKLKQMWKSPNGTIRNILGGTVFREAIICKNIPRLVSGWVKPIIIGRHAYGDQYRATDFVVPGPGKVEITYTPSDGTQKVTYLVHNFEEGGGVAMGMYNQDKSIEDFAHSSFQMALSKGWPLYLSTKNTILKKYDGRFKDIFQEIYDKQYKSQFEAQKIWYEHRLIDDMVAQAMKSEGGFIWACKNYDGDVQSDSVAQGYGSLGMMTSVLVCPDGKTVEAEAAHGTVTRHYRMYQKGQETSTNPIASIFAWTRGLAHRAKLDNNKELAFFANALEEVSIETIEAGFMTKDLAACIKGLPNVQRSDYLNTFEFMDKLGENLKIKLAQAKL</sequence>
<comment type="function">
    <text evidence="3 4 9 11">Catalyzes the NADP(+)-dependent oxidative decarboxylation of isocitrate (D-threo-isocitrate) to 2-ketoglutarate (2-oxoglutarate), which is required by other enzymes such as the phytanoyl-CoA dioxygenase (PubMed:10521434, PubMed:19935646). Plays a critical role in the generation of NADPH, an important cofactor in many biosynthesis pathways (PubMed:10521434). May act as a corneal epithelial crystallin and may be involved in maintaining corneal epithelial transparency (By similarity).</text>
</comment>
<comment type="catalytic activity">
    <reaction evidence="4 9">
        <text>D-threo-isocitrate + NADP(+) = 2-oxoglutarate + CO2 + NADPH</text>
        <dbReference type="Rhea" id="RHEA:19629"/>
        <dbReference type="ChEBI" id="CHEBI:15562"/>
        <dbReference type="ChEBI" id="CHEBI:16526"/>
        <dbReference type="ChEBI" id="CHEBI:16810"/>
        <dbReference type="ChEBI" id="CHEBI:57783"/>
        <dbReference type="ChEBI" id="CHEBI:58349"/>
        <dbReference type="EC" id="1.1.1.42"/>
    </reaction>
    <physiologicalReaction direction="left-to-right" evidence="9">
        <dbReference type="Rhea" id="RHEA:19630"/>
    </physiologicalReaction>
</comment>
<comment type="cofactor">
    <cofactor evidence="9">
        <name>Mg(2+)</name>
        <dbReference type="ChEBI" id="CHEBI:18420"/>
    </cofactor>
    <cofactor evidence="9">
        <name>Mn(2+)</name>
        <dbReference type="ChEBI" id="CHEBI:29035"/>
    </cofactor>
    <text evidence="9">Binds 1 Mg(2+) or Mn(2+) ion per subunit.</text>
</comment>
<comment type="biophysicochemical properties">
    <kinetics>
        <KM evidence="4">112 uM for NADP(+)</KM>
        <KM evidence="9">49 uM for NADP(+)</KM>
        <KM evidence="9">29 uM for magnesium chloride</KM>
        <KM evidence="4">76 uM for isocitrate</KM>
        <KM evidence="9">65 uM for isocitrate</KM>
    </kinetics>
</comment>
<comment type="subunit">
    <text evidence="5 9">Homodimer.</text>
</comment>
<comment type="interaction">
    <interactant intactId="EBI-715695">
        <id>O75874</id>
    </interactant>
    <interactant intactId="EBI-25817233">
        <id>P0DP23</id>
        <label>CALM1</label>
    </interactant>
    <organismsDiffer>false</organismsDiffer>
    <experiments>7</experiments>
</comment>
<comment type="interaction">
    <interactant intactId="EBI-715695">
        <id>O75874</id>
    </interactant>
    <interactant intactId="EBI-1049597">
        <id>P27797</id>
        <label>CALR</label>
    </interactant>
    <organismsDiffer>false</organismsDiffer>
    <experiments>3</experiments>
</comment>
<comment type="interaction">
    <interactant intactId="EBI-715695">
        <id>O75874</id>
    </interactant>
    <interactant intactId="EBI-351007">
        <id>P36957</id>
        <label>DLST</label>
    </interactant>
    <organismsDiffer>false</organismsDiffer>
    <experiments>3</experiments>
</comment>
<comment type="interaction">
    <interactant intactId="EBI-715695">
        <id>O75874</id>
    </interactant>
    <interactant intactId="EBI-715695">
        <id>O75874</id>
        <label>IDH1</label>
    </interactant>
    <organismsDiffer>false</organismsDiffer>
    <experiments>4</experiments>
</comment>
<comment type="interaction">
    <interactant intactId="EBI-715695">
        <id>O75874</id>
    </interactant>
    <interactant intactId="EBI-1055945">
        <id>Q8TDX7</id>
        <label>NEK7</label>
    </interactant>
    <organismsDiffer>false</organismsDiffer>
    <experiments>3</experiments>
</comment>
<comment type="interaction">
    <interactant intactId="EBI-715695">
        <id>O75874</id>
    </interactant>
    <interactant intactId="EBI-716404">
        <id>P16284</id>
        <label>PECAM1</label>
    </interactant>
    <organismsDiffer>false</organismsDiffer>
    <experiments>3</experiments>
</comment>
<comment type="interaction">
    <interactant intactId="EBI-715695">
        <id>O75874</id>
    </interactant>
    <interactant intactId="EBI-476586">
        <id>P17612</id>
        <label>PRKACA</label>
    </interactant>
    <organismsDiffer>false</organismsDiffer>
    <experiments>3</experiments>
</comment>
<comment type="interaction">
    <interactant intactId="EBI-715695">
        <id>O75874</id>
    </interactant>
    <interactant intactId="EBI-350723">
        <id>P50454</id>
        <label>SERPINH1</label>
    </interactant>
    <organismsDiffer>false</organismsDiffer>
    <experiments>3</experiments>
</comment>
<comment type="interaction">
    <interactant intactId="EBI-715695">
        <id>O75874</id>
    </interactant>
    <interactant intactId="EBI-296151">
        <id>P37173</id>
        <label>TGFBR2</label>
    </interactant>
    <organismsDiffer>false</organismsDiffer>
    <experiments>3</experiments>
</comment>
<comment type="interaction">
    <interactant intactId="EBI-715695">
        <id>O75874</id>
    </interactant>
    <interactant intactId="EBI-11026619">
        <id>Q05086-3</id>
        <label>UBE3A</label>
    </interactant>
    <organismsDiffer>false</organismsDiffer>
    <experiments>3</experiments>
</comment>
<comment type="subcellular location">
    <subcellularLocation>
        <location evidence="4">Cytoplasm</location>
        <location evidence="4">Cytosol</location>
    </subcellularLocation>
    <subcellularLocation>
        <location evidence="4">Peroxisome</location>
    </subcellularLocation>
</comment>
<comment type="PTM">
    <text evidence="1">Acetylation at Lys-374 dramatically reduces catalytic activity.</text>
</comment>
<comment type="disease" evidence="8 9">
    <disease id="DI-02566">
        <name>Glioma</name>
        <acronym>GLM</acronym>
        <description>Gliomas are benign or malignant central nervous system neoplasms derived from glial cells. They comprise astrocytomas and glioblastoma multiforme that are derived from astrocytes, oligodendrogliomas derived from oligodendrocytes and ependymomas derived from ependymocytes.</description>
        <dbReference type="MIM" id="137800"/>
    </disease>
    <text evidence="9">The gene represented in this entry is involved in disease pathogenesis. Mutations affecting Arg-132 are tissue-specific, and suggest that this residue plays a unique role in the development of high-grade gliomas. Mutations of Arg-132 to Cys, His, Leu or Ser abolish magnesium binding and abolish the conversion of isocitrate to alpha-ketoglutarate. Instead, alpha-ketoglutarate is converted to R(-)-2-hydroxyglutarate. Elevated levels of R(-)-2-hydroxyglutarate are correlated with an elevated risk of malignant brain tumors.</text>
</comment>
<comment type="disease">
    <text evidence="10">Genetic variations are associated with cartilaginous tumors such as enchondroma or chondrosarcoma. Mutations of Arg-132 to Cys, Gly or His abolish the conversion of isocitrate to alpha-ketoglutarate. Instead, alpha-ketoglutarate is converted to R(-)-2-hydroxyglutarate.</text>
</comment>
<comment type="similarity">
    <text evidence="13">Belongs to the isocitrate and isopropylmalate dehydrogenases family.</text>
</comment>
<comment type="online information" name="Wikipedia">
    <link uri="https://en.wikipedia.org/wiki/Isocitrate_dehydrogenase"/>
    <text>Isocitrate dehydrogenase entry</text>
</comment>
<name>IDHC_HUMAN</name>
<keyword id="KW-0002">3D-structure</keyword>
<keyword id="KW-0007">Acetylation</keyword>
<keyword id="KW-0963">Cytoplasm</keyword>
<keyword id="KW-0903">Direct protein sequencing</keyword>
<keyword id="KW-0329">Glyoxylate bypass</keyword>
<keyword id="KW-0460">Magnesium</keyword>
<keyword id="KW-0464">Manganese</keyword>
<keyword id="KW-0479">Metal-binding</keyword>
<keyword id="KW-0521">NADP</keyword>
<keyword id="KW-0560">Oxidoreductase</keyword>
<keyword id="KW-0576">Peroxisome</keyword>
<keyword id="KW-0597">Phosphoprotein</keyword>
<keyword id="KW-1267">Proteomics identification</keyword>
<keyword id="KW-1185">Reference proteome</keyword>
<keyword id="KW-0816">Tricarboxylic acid cycle</keyword>
<organism>
    <name type="scientific">Homo sapiens</name>
    <name type="common">Human</name>
    <dbReference type="NCBI Taxonomy" id="9606"/>
    <lineage>
        <taxon>Eukaryota</taxon>
        <taxon>Metazoa</taxon>
        <taxon>Chordata</taxon>
        <taxon>Craniata</taxon>
        <taxon>Vertebrata</taxon>
        <taxon>Euteleostomi</taxon>
        <taxon>Mammalia</taxon>
        <taxon>Eutheria</taxon>
        <taxon>Euarchontoglires</taxon>
        <taxon>Primates</taxon>
        <taxon>Haplorrhini</taxon>
        <taxon>Catarrhini</taxon>
        <taxon>Hominidae</taxon>
        <taxon>Homo</taxon>
    </lineage>
</organism>
<gene>
    <name type="primary">IDH1</name>
    <name type="synonym">PICD</name>
</gene>
<accession>O75874</accession>
<accession>Q567U4</accession>
<accession>Q6FHQ6</accession>
<accession>Q7Z3V0</accession>
<accession>Q93090</accession>
<accession>Q9NTJ9</accession>
<accession>Q9UKW8</accession>